<feature type="chain" id="PRO_0000088694" description="Transmembrane protease serine 5">
    <location>
        <begin position="1"/>
        <end position="457"/>
    </location>
</feature>
<feature type="topological domain" description="Cytoplasmic" evidence="2">
    <location>
        <begin position="1"/>
        <end position="49"/>
    </location>
</feature>
<feature type="transmembrane region" description="Helical; Signal-anchor for type II membrane protein" evidence="2">
    <location>
        <begin position="50"/>
        <end position="70"/>
    </location>
</feature>
<feature type="topological domain" description="Extracellular" evidence="2">
    <location>
        <begin position="71"/>
        <end position="457"/>
    </location>
</feature>
<feature type="domain" description="SRCR">
    <location>
        <begin position="112"/>
        <end position="207"/>
    </location>
</feature>
<feature type="domain" description="Peptidase S1" evidence="3">
    <location>
        <begin position="218"/>
        <end position="453"/>
    </location>
</feature>
<feature type="region of interest" description="Disordered" evidence="4">
    <location>
        <begin position="1"/>
        <end position="21"/>
    </location>
</feature>
<feature type="active site" description="Charge relay system" evidence="1">
    <location>
        <position position="258"/>
    </location>
</feature>
<feature type="active site" description="Charge relay system" evidence="1">
    <location>
        <position position="308"/>
    </location>
</feature>
<feature type="active site" description="Charge relay system" evidence="1">
    <location>
        <position position="405"/>
    </location>
</feature>
<feature type="site" description="Cleavage" evidence="2">
    <location>
        <begin position="217"/>
        <end position="218"/>
    </location>
</feature>
<feature type="glycosylation site" description="N-linked (GlcNAc...) asparagine" evidence="2">
    <location>
        <position position="163"/>
    </location>
</feature>
<feature type="glycosylation site" description="N-linked (GlcNAc...) asparagine" evidence="2">
    <location>
        <position position="170"/>
    </location>
</feature>
<feature type="glycosylation site" description="N-linked (GlcNAc...) asparagine" evidence="2">
    <location>
        <position position="195"/>
    </location>
</feature>
<feature type="glycosylation site" description="N-linked (GlcNAc...) asparagine" evidence="2">
    <location>
        <position position="319"/>
    </location>
</feature>
<feature type="glycosylation site" description="N-linked (GlcNAc...) asparagine" evidence="2">
    <location>
        <position position="375"/>
    </location>
</feature>
<feature type="disulfide bond" evidence="3">
    <location>
        <begin position="135"/>
        <end position="196"/>
    </location>
</feature>
<feature type="disulfide bond" evidence="3">
    <location>
        <begin position="148"/>
        <end position="206"/>
    </location>
</feature>
<feature type="disulfide bond" evidence="3">
    <location>
        <begin position="209"/>
        <end position="328"/>
    </location>
</feature>
<feature type="disulfide bond" evidence="3">
    <location>
        <begin position="243"/>
        <end position="259"/>
    </location>
</feature>
<feature type="disulfide bond" evidence="3">
    <location>
        <begin position="342"/>
        <end position="411"/>
    </location>
</feature>
<feature type="disulfide bond" evidence="3">
    <location>
        <begin position="374"/>
        <end position="390"/>
    </location>
</feature>
<feature type="disulfide bond" evidence="3">
    <location>
        <begin position="401"/>
        <end position="429"/>
    </location>
</feature>
<feature type="sequence variant" id="VAR_038005" description="In patients with sporadic hearing loss; dbSNP:rs1953087164." evidence="5">
    <original>D</original>
    <variation>V</variation>
    <location>
        <position position="31"/>
    </location>
</feature>
<feature type="sequence variant" id="VAR_038006" description="In dbSNP:rs11601425." evidence="5">
    <original>R</original>
    <variation>Q</variation>
    <location>
        <position position="46"/>
    </location>
</feature>
<feature type="sequence variant" id="VAR_038007" description="In dbSNP:rs7939917.">
    <original>V</original>
    <variation>M</variation>
    <location>
        <position position="125"/>
    </location>
</feature>
<feature type="sequence variant" id="VAR_038008" description="In dbSNP:rs1263487635." evidence="5">
    <original>A</original>
    <variation>V</variation>
    <location>
        <position position="249"/>
    </location>
</feature>
<feature type="sequence variant" id="VAR_038009" description="In patients with sporadic hearing loss; no detectable proteolytic activity in a yeast-based protease assay." evidence="5">
    <original>A</original>
    <variation>S</variation>
    <location>
        <position position="317"/>
    </location>
</feature>
<feature type="sequence variant" id="VAR_038010" evidence="5">
    <original>P</original>
    <variation>S</variation>
    <location>
        <position position="337"/>
    </location>
</feature>
<feature type="sequence variant" id="VAR_038011" description="Reduced proteolytic activity in a yeast-based protease assay; dbSNP:rs7110736." evidence="5">
    <original>F</original>
    <variation>L</variation>
    <location>
        <position position="369"/>
    </location>
</feature>
<feature type="sequence conflict" description="In Ref. 1; BAB20375." evidence="6" ref="1">
    <original>G</original>
    <variation>A</variation>
    <location>
        <position position="428"/>
    </location>
</feature>
<keyword id="KW-1003">Cell membrane</keyword>
<keyword id="KW-1015">Disulfide bond</keyword>
<keyword id="KW-0325">Glycoprotein</keyword>
<keyword id="KW-0378">Hydrolase</keyword>
<keyword id="KW-0472">Membrane</keyword>
<keyword id="KW-0645">Protease</keyword>
<keyword id="KW-1267">Proteomics identification</keyword>
<keyword id="KW-1185">Reference proteome</keyword>
<keyword id="KW-0720">Serine protease</keyword>
<keyword id="KW-0735">Signal-anchor</keyword>
<keyword id="KW-0812">Transmembrane</keyword>
<keyword id="KW-1133">Transmembrane helix</keyword>
<name>TMPS5_HUMAN</name>
<dbReference type="EC" id="3.4.21.-"/>
<dbReference type="EMBL" id="AB028140">
    <property type="protein sequence ID" value="BAB20375.1"/>
    <property type="molecule type" value="mRNA"/>
</dbReference>
<dbReference type="EMBL" id="AP002436">
    <property type="status" value="NOT_ANNOTATED_CDS"/>
    <property type="molecule type" value="Genomic_DNA"/>
</dbReference>
<dbReference type="EMBL" id="AP003402">
    <property type="status" value="NOT_ANNOTATED_CDS"/>
    <property type="molecule type" value="Genomic_DNA"/>
</dbReference>
<dbReference type="CCDS" id="CCDS44735.1"/>
<dbReference type="RefSeq" id="NP_001275678.1">
    <property type="nucleotide sequence ID" value="NM_001288749.1"/>
</dbReference>
<dbReference type="RefSeq" id="NP_001275679.1">
    <property type="nucleotide sequence ID" value="NM_001288750.1"/>
</dbReference>
<dbReference type="RefSeq" id="NP_001275680.1">
    <property type="nucleotide sequence ID" value="NM_001288751.1"/>
</dbReference>
<dbReference type="RefSeq" id="NP_001275681.1">
    <property type="nucleotide sequence ID" value="NM_001288752.1"/>
</dbReference>
<dbReference type="RefSeq" id="NP_110397.2">
    <property type="nucleotide sequence ID" value="NM_030770.4"/>
</dbReference>
<dbReference type="SMR" id="Q9H3S3"/>
<dbReference type="BioGRID" id="123345">
    <property type="interactions" value="55"/>
</dbReference>
<dbReference type="FunCoup" id="Q9H3S3">
    <property type="interactions" value="160"/>
</dbReference>
<dbReference type="IntAct" id="Q9H3S3">
    <property type="interactions" value="39"/>
</dbReference>
<dbReference type="STRING" id="9606.ENSP00000299882"/>
<dbReference type="MEROPS" id="S01.313"/>
<dbReference type="GlyCosmos" id="Q9H3S3">
    <property type="glycosylation" value="5 sites, No reported glycans"/>
</dbReference>
<dbReference type="GlyGen" id="Q9H3S3">
    <property type="glycosylation" value="5 sites"/>
</dbReference>
<dbReference type="PhosphoSitePlus" id="Q9H3S3"/>
<dbReference type="BioMuta" id="TMPRSS5"/>
<dbReference type="DMDM" id="296452845"/>
<dbReference type="MassIVE" id="Q9H3S3"/>
<dbReference type="PaxDb" id="9606-ENSP00000299882"/>
<dbReference type="PeptideAtlas" id="Q9H3S3"/>
<dbReference type="ProteomicsDB" id="80747"/>
<dbReference type="Antibodypedia" id="2582">
    <property type="antibodies" value="330 antibodies from 30 providers"/>
</dbReference>
<dbReference type="DNASU" id="80975"/>
<dbReference type="Ensembl" id="ENST00000299882.11">
    <property type="protein sequence ID" value="ENSP00000299882.5"/>
    <property type="gene ID" value="ENSG00000166682.13"/>
</dbReference>
<dbReference type="GeneID" id="80975"/>
<dbReference type="KEGG" id="hsa:80975"/>
<dbReference type="MANE-Select" id="ENST00000299882.11">
    <property type="protein sequence ID" value="ENSP00000299882.5"/>
    <property type="RefSeq nucleotide sequence ID" value="NM_030770.4"/>
    <property type="RefSeq protein sequence ID" value="NP_110397.2"/>
</dbReference>
<dbReference type="UCSC" id="uc001poc.6">
    <property type="organism name" value="human"/>
</dbReference>
<dbReference type="AGR" id="HGNC:14908"/>
<dbReference type="CTD" id="80975"/>
<dbReference type="DisGeNET" id="80975"/>
<dbReference type="GeneCards" id="TMPRSS5"/>
<dbReference type="HGNC" id="HGNC:14908">
    <property type="gene designation" value="TMPRSS5"/>
</dbReference>
<dbReference type="HPA" id="ENSG00000166682">
    <property type="expression patterns" value="Group enriched (brain, salivary gland)"/>
</dbReference>
<dbReference type="MIM" id="606751">
    <property type="type" value="gene"/>
</dbReference>
<dbReference type="neXtProt" id="NX_Q9H3S3"/>
<dbReference type="OpenTargets" id="ENSG00000166682"/>
<dbReference type="PharmGKB" id="PA37920"/>
<dbReference type="VEuPathDB" id="HostDB:ENSG00000166682"/>
<dbReference type="eggNOG" id="KOG3627">
    <property type="taxonomic scope" value="Eukaryota"/>
</dbReference>
<dbReference type="GeneTree" id="ENSGT00940000159163"/>
<dbReference type="InParanoid" id="Q9H3S3"/>
<dbReference type="OMA" id="CSERWNS"/>
<dbReference type="OrthoDB" id="5979691at2759"/>
<dbReference type="PAN-GO" id="Q9H3S3">
    <property type="GO annotations" value="1 GO annotation based on evolutionary models"/>
</dbReference>
<dbReference type="PhylomeDB" id="Q9H3S3"/>
<dbReference type="TreeFam" id="TF351678"/>
<dbReference type="PathwayCommons" id="Q9H3S3"/>
<dbReference type="SignaLink" id="Q9H3S3"/>
<dbReference type="BioGRID-ORCS" id="80975">
    <property type="hits" value="6 hits in 1147 CRISPR screens"/>
</dbReference>
<dbReference type="ChiTaRS" id="TMPRSS5">
    <property type="organism name" value="human"/>
</dbReference>
<dbReference type="GenomeRNAi" id="80975"/>
<dbReference type="Pharos" id="Q9H3S3">
    <property type="development level" value="Tbio"/>
</dbReference>
<dbReference type="PRO" id="PR:Q9H3S3"/>
<dbReference type="Proteomes" id="UP000005640">
    <property type="component" value="Chromosome 11"/>
</dbReference>
<dbReference type="RNAct" id="Q9H3S3">
    <property type="molecule type" value="protein"/>
</dbReference>
<dbReference type="Bgee" id="ENSG00000166682">
    <property type="expression patterns" value="Expressed in tibial nerve and 109 other cell types or tissues"/>
</dbReference>
<dbReference type="ExpressionAtlas" id="Q9H3S3">
    <property type="expression patterns" value="baseline and differential"/>
</dbReference>
<dbReference type="GO" id="GO:0043025">
    <property type="term" value="C:neuronal cell body"/>
    <property type="evidence" value="ECO:0007669"/>
    <property type="project" value="Ensembl"/>
</dbReference>
<dbReference type="GO" id="GO:0005886">
    <property type="term" value="C:plasma membrane"/>
    <property type="evidence" value="ECO:0000314"/>
    <property type="project" value="UniProtKB"/>
</dbReference>
<dbReference type="GO" id="GO:0008233">
    <property type="term" value="F:peptidase activity"/>
    <property type="evidence" value="ECO:0000315"/>
    <property type="project" value="UniProtKB"/>
</dbReference>
<dbReference type="GO" id="GO:0004252">
    <property type="term" value="F:serine-type endopeptidase activity"/>
    <property type="evidence" value="ECO:0007669"/>
    <property type="project" value="InterPro"/>
</dbReference>
<dbReference type="GO" id="GO:0006508">
    <property type="term" value="P:proteolysis"/>
    <property type="evidence" value="ECO:0000315"/>
    <property type="project" value="UniProtKB"/>
</dbReference>
<dbReference type="CDD" id="cd00190">
    <property type="entry name" value="Tryp_SPc"/>
    <property type="match status" value="1"/>
</dbReference>
<dbReference type="FunFam" id="2.40.10.10:FF:000092">
    <property type="entry name" value="Transmembrane protease serine 5"/>
    <property type="match status" value="1"/>
</dbReference>
<dbReference type="FunFam" id="3.10.250.10:FF:000041">
    <property type="entry name" value="Transmembrane protease, serine 5 (Spinesin), isoform CRA_c"/>
    <property type="match status" value="1"/>
</dbReference>
<dbReference type="Gene3D" id="2.40.10.10">
    <property type="entry name" value="Trypsin-like serine proteases"/>
    <property type="match status" value="1"/>
</dbReference>
<dbReference type="InterPro" id="IPR009003">
    <property type="entry name" value="Peptidase_S1_PA"/>
</dbReference>
<dbReference type="InterPro" id="IPR043504">
    <property type="entry name" value="Peptidase_S1_PA_chymotrypsin"/>
</dbReference>
<dbReference type="InterPro" id="IPR001314">
    <property type="entry name" value="Peptidase_S1A"/>
</dbReference>
<dbReference type="InterPro" id="IPR001190">
    <property type="entry name" value="SRCR"/>
</dbReference>
<dbReference type="InterPro" id="IPR036772">
    <property type="entry name" value="SRCR-like_dom_sf"/>
</dbReference>
<dbReference type="InterPro" id="IPR001254">
    <property type="entry name" value="Trypsin_dom"/>
</dbReference>
<dbReference type="InterPro" id="IPR018114">
    <property type="entry name" value="TRYPSIN_HIS"/>
</dbReference>
<dbReference type="InterPro" id="IPR033116">
    <property type="entry name" value="TRYPSIN_SER"/>
</dbReference>
<dbReference type="PANTHER" id="PTHR24252">
    <property type="entry name" value="ACROSIN-RELATED"/>
    <property type="match status" value="1"/>
</dbReference>
<dbReference type="PANTHER" id="PTHR24252:SF7">
    <property type="entry name" value="HYALIN"/>
    <property type="match status" value="1"/>
</dbReference>
<dbReference type="Pfam" id="PF15494">
    <property type="entry name" value="SRCR_2"/>
    <property type="match status" value="1"/>
</dbReference>
<dbReference type="Pfam" id="PF00089">
    <property type="entry name" value="Trypsin"/>
    <property type="match status" value="1"/>
</dbReference>
<dbReference type="PRINTS" id="PR00722">
    <property type="entry name" value="CHYMOTRYPSIN"/>
</dbReference>
<dbReference type="SMART" id="SM00020">
    <property type="entry name" value="Tryp_SPc"/>
    <property type="match status" value="1"/>
</dbReference>
<dbReference type="SUPFAM" id="SSF56487">
    <property type="entry name" value="SRCR-like"/>
    <property type="match status" value="1"/>
</dbReference>
<dbReference type="SUPFAM" id="SSF50494">
    <property type="entry name" value="Trypsin-like serine proteases"/>
    <property type="match status" value="1"/>
</dbReference>
<dbReference type="PROSITE" id="PS00420">
    <property type="entry name" value="SRCR_1"/>
    <property type="match status" value="1"/>
</dbReference>
<dbReference type="PROSITE" id="PS50240">
    <property type="entry name" value="TRYPSIN_DOM"/>
    <property type="match status" value="1"/>
</dbReference>
<dbReference type="PROSITE" id="PS00134">
    <property type="entry name" value="TRYPSIN_HIS"/>
    <property type="match status" value="1"/>
</dbReference>
<dbReference type="PROSITE" id="PS00135">
    <property type="entry name" value="TRYPSIN_SER"/>
    <property type="match status" value="1"/>
</dbReference>
<reference key="1">
    <citation type="journal article" date="2002" name="J. Biol. Chem.">
        <title>Spinesin/TMPRSS5, a novel transmembrane serine protease, cloned from human spinal cord.</title>
        <authorList>
            <person name="Yamaguchi N."/>
            <person name="Okui A."/>
            <person name="Yamada T."/>
            <person name="Nakazato H."/>
            <person name="Mitsui S."/>
        </authorList>
    </citation>
    <scope>NUCLEOTIDE SEQUENCE [MRNA]</scope>
    <source>
        <tissue>Brain</tissue>
    </source>
</reference>
<reference key="2">
    <citation type="journal article" date="2006" name="Nature">
        <title>Human chromosome 11 DNA sequence and analysis including novel gene identification.</title>
        <authorList>
            <person name="Taylor T.D."/>
            <person name="Noguchi H."/>
            <person name="Totoki Y."/>
            <person name="Toyoda A."/>
            <person name="Kuroki Y."/>
            <person name="Dewar K."/>
            <person name="Lloyd C."/>
            <person name="Itoh T."/>
            <person name="Takeda T."/>
            <person name="Kim D.-W."/>
            <person name="She X."/>
            <person name="Barlow K.F."/>
            <person name="Bloom T."/>
            <person name="Bruford E."/>
            <person name="Chang J.L."/>
            <person name="Cuomo C.A."/>
            <person name="Eichler E."/>
            <person name="FitzGerald M.G."/>
            <person name="Jaffe D.B."/>
            <person name="LaButti K."/>
            <person name="Nicol R."/>
            <person name="Park H.-S."/>
            <person name="Seaman C."/>
            <person name="Sougnez C."/>
            <person name="Yang X."/>
            <person name="Zimmer A.R."/>
            <person name="Zody M.C."/>
            <person name="Birren B.W."/>
            <person name="Nusbaum C."/>
            <person name="Fujiyama A."/>
            <person name="Hattori M."/>
            <person name="Rogers J."/>
            <person name="Lander E.S."/>
            <person name="Sakaki Y."/>
        </authorList>
    </citation>
    <scope>NUCLEOTIDE SEQUENCE [LARGE SCALE GENOMIC DNA]</scope>
</reference>
<reference key="3">
    <citation type="journal article" date="2008" name="Hum. Mutat.">
        <title>An integrated genetic and functional analysis of the role of type II transmembrane serine proteases (TMPRSSs) in hearing loss.</title>
        <authorList>
            <person name="Guipponi M."/>
            <person name="Toh M.-Y."/>
            <person name="Tan J."/>
            <person name="Park D."/>
            <person name="Hanson K."/>
            <person name="Ballana E."/>
            <person name="Kwong D."/>
            <person name="Cannon P.Z.F."/>
            <person name="Wu Q."/>
            <person name="Gout A."/>
            <person name="Delorenzi M."/>
            <person name="Speed T.P."/>
            <person name="Smith R.J.H."/>
            <person name="Dahl H.-H.M."/>
            <person name="Petersen M."/>
            <person name="Teasdale R.D."/>
            <person name="Estivill X."/>
            <person name="Park W.J."/>
            <person name="Scott H.S."/>
        </authorList>
    </citation>
    <scope>FUNCTION</scope>
    <scope>SUBCELLULAR LOCATION</scope>
    <scope>VARIANTS VAL-31; GLN-46; VAL-249; SER-317; SER-337 AND LEU-369</scope>
    <scope>CHARACTERIZATION OF VARIANTS SER-317 AND LEU-369</scope>
</reference>
<organism>
    <name type="scientific">Homo sapiens</name>
    <name type="common">Human</name>
    <dbReference type="NCBI Taxonomy" id="9606"/>
    <lineage>
        <taxon>Eukaryota</taxon>
        <taxon>Metazoa</taxon>
        <taxon>Chordata</taxon>
        <taxon>Craniata</taxon>
        <taxon>Vertebrata</taxon>
        <taxon>Euteleostomi</taxon>
        <taxon>Mammalia</taxon>
        <taxon>Eutheria</taxon>
        <taxon>Euarchontoglires</taxon>
        <taxon>Primates</taxon>
        <taxon>Haplorrhini</taxon>
        <taxon>Catarrhini</taxon>
        <taxon>Hominidae</taxon>
        <taxon>Homo</taxon>
    </lineage>
</organism>
<comment type="function">
    <text evidence="5">May play a role in hearing.</text>
</comment>
<comment type="subcellular location">
    <subcellularLocation>
        <location evidence="6">Cell membrane</location>
        <topology evidence="6">Single-pass type II membrane protein</topology>
    </subcellularLocation>
</comment>
<comment type="tissue specificity">
    <text>Brain-specific. Predominantly expressed in neurons, in their axons, and at the synapses of motoneurons in the spinal cord.</text>
</comment>
<comment type="disease">
    <text evidence="5">Defects in TMPRSS5 may be a cause of deafness.</text>
</comment>
<comment type="similarity">
    <text evidence="3">Belongs to the peptidase S1 family.</text>
</comment>
<gene>
    <name type="primary">TMPRSS5</name>
</gene>
<protein>
    <recommendedName>
        <fullName>Transmembrane protease serine 5</fullName>
        <ecNumber>3.4.21.-</ecNumber>
    </recommendedName>
    <alternativeName>
        <fullName>Spinesin</fullName>
    </alternativeName>
</protein>
<evidence type="ECO:0000250" key="1"/>
<evidence type="ECO:0000255" key="2"/>
<evidence type="ECO:0000255" key="3">
    <source>
        <dbReference type="PROSITE-ProRule" id="PRU00274"/>
    </source>
</evidence>
<evidence type="ECO:0000256" key="4">
    <source>
        <dbReference type="SAM" id="MobiDB-lite"/>
    </source>
</evidence>
<evidence type="ECO:0000269" key="5">
    <source>
    </source>
</evidence>
<evidence type="ECO:0000305" key="6"/>
<sequence length="457" mass="49560">MSLMLDDQPPMEAQYAEEGPGPGIFRAEPGDQQHPISQAVCWRSMRRGCAVLGALGLLAGAGVGSWLLVLYLCPAASQPISGTLQDEEITLSCSEASAEEALLPALPKTVSFRINSEDFLLEAQVRDQPRWLLVCHEGWSPALGLQICWSLGHLRLTHHKGVNLTDIKLNSSQEFAQLSPRLGGFLEEAWQPRNNCTSGQVVSLRCSECGARPLASRIVGGQSVAPGRWPWQASVALGFRHTCGGSVLAPRWVVTAAHCMHSFRLARLSSWRVHAGLVSHSAVRPHQGALVERIIPHPLYSAQNHDYDVALLRLQTALNFSDTVGAVCLPAKEQHFPKGSRCWVSGWGHTHPSHTYSSDMLQDTVVPLFSTQLCNSSCVYSGALTPRMLCAGYLDGRADACQGDSGGPLVCPDGDTWRLVGVVSWGRGCAEPNHPGVYAKVAEFLDWIHDTAQDSLL</sequence>
<accession>Q9H3S3</accession>
<proteinExistence type="evidence at protein level"/>